<feature type="chain" id="PRO_0000304694" description="Trans-acting enoyl reductase">
    <location>
        <begin position="1"/>
        <end position="418"/>
    </location>
</feature>
<dbReference type="EC" id="1.3.1.-"/>
<dbReference type="EMBL" id="U00024">
    <property type="protein sequence ID" value="AAA50935.1"/>
    <property type="status" value="ALT_FRAME"/>
    <property type="molecule type" value="Genomic_DNA"/>
</dbReference>
<dbReference type="EMBL" id="U00024">
    <property type="protein sequence ID" value="AAA50936.1"/>
    <property type="status" value="ALT_FRAME"/>
    <property type="molecule type" value="Genomic_DNA"/>
</dbReference>
<dbReference type="EMBL" id="AL123456">
    <property type="protein sequence ID" value="CCP45757.1"/>
    <property type="molecule type" value="Genomic_DNA"/>
</dbReference>
<dbReference type="PIR" id="F70669">
    <property type="entry name" value="F70669"/>
</dbReference>
<dbReference type="RefSeq" id="NP_217469.1">
    <property type="nucleotide sequence ID" value="NC_000962.3"/>
</dbReference>
<dbReference type="RefSeq" id="WP_003414903.1">
    <property type="nucleotide sequence ID" value="NZ_NVQJ01000015.1"/>
</dbReference>
<dbReference type="FunCoup" id="P9WGV5">
    <property type="interactions" value="227"/>
</dbReference>
<dbReference type="STRING" id="83332.Rv2953"/>
<dbReference type="PaxDb" id="83332-Rv2953"/>
<dbReference type="DNASU" id="887772"/>
<dbReference type="GeneID" id="887772"/>
<dbReference type="KEGG" id="mtu:Rv2953"/>
<dbReference type="KEGG" id="mtv:RVBD_2953"/>
<dbReference type="TubercuList" id="Rv2953"/>
<dbReference type="eggNOG" id="COG3268">
    <property type="taxonomic scope" value="Bacteria"/>
</dbReference>
<dbReference type="InParanoid" id="P9WGV5"/>
<dbReference type="OrthoDB" id="4369409at2"/>
<dbReference type="PhylomeDB" id="P9WGV5"/>
<dbReference type="BioCyc" id="MetaCyc:G185E-7207-MONOMER"/>
<dbReference type="Proteomes" id="UP000001584">
    <property type="component" value="Chromosome"/>
</dbReference>
<dbReference type="GO" id="GO:0009274">
    <property type="term" value="C:peptidoglycan-based cell wall"/>
    <property type="evidence" value="ECO:0007005"/>
    <property type="project" value="MTBBASE"/>
</dbReference>
<dbReference type="GO" id="GO:0005886">
    <property type="term" value="C:plasma membrane"/>
    <property type="evidence" value="ECO:0007005"/>
    <property type="project" value="MTBBASE"/>
</dbReference>
<dbReference type="GO" id="GO:0016491">
    <property type="term" value="F:oxidoreductase activity"/>
    <property type="evidence" value="ECO:0007669"/>
    <property type="project" value="UniProtKB-KW"/>
</dbReference>
<dbReference type="GO" id="GO:0071770">
    <property type="term" value="P:DIM/DIP cell wall layer assembly"/>
    <property type="evidence" value="ECO:0000315"/>
    <property type="project" value="MTBBASE"/>
</dbReference>
<dbReference type="GO" id="GO:0009247">
    <property type="term" value="P:glycolipid biosynthetic process"/>
    <property type="evidence" value="ECO:0000315"/>
    <property type="project" value="MTBBASE"/>
</dbReference>
<dbReference type="FunFam" id="3.40.50.720:FF:000413">
    <property type="entry name" value="Trans-acting enoyl reductase"/>
    <property type="match status" value="1"/>
</dbReference>
<dbReference type="Gene3D" id="3.40.50.720">
    <property type="entry name" value="NAD(P)-binding Rossmann-like Domain"/>
    <property type="match status" value="1"/>
</dbReference>
<dbReference type="InterPro" id="IPR036291">
    <property type="entry name" value="NAD(P)-bd_dom_sf"/>
</dbReference>
<dbReference type="InterPro" id="IPR051276">
    <property type="entry name" value="Saccharopine_DH-like_oxidrdct"/>
</dbReference>
<dbReference type="InterPro" id="IPR005097">
    <property type="entry name" value="Sacchrp_dh_NADP-bd"/>
</dbReference>
<dbReference type="PANTHER" id="PTHR12286">
    <property type="entry name" value="SACCHAROPINE DEHYDROGENASE-LIKE OXIDOREDUCTASE"/>
    <property type="match status" value="1"/>
</dbReference>
<dbReference type="PANTHER" id="PTHR12286:SF5">
    <property type="entry name" value="SACCHAROPINE DEHYDROGENASE-LIKE OXIDOREDUCTASE"/>
    <property type="match status" value="1"/>
</dbReference>
<dbReference type="Pfam" id="PF03435">
    <property type="entry name" value="Sacchrp_dh_NADP"/>
    <property type="match status" value="1"/>
</dbReference>
<dbReference type="SUPFAM" id="SSF51735">
    <property type="entry name" value="NAD(P)-binding Rossmann-fold domains"/>
    <property type="match status" value="1"/>
</dbReference>
<name>TAER_MYCTU</name>
<protein>
    <recommendedName>
        <fullName>Trans-acting enoyl reductase</fullName>
        <ecNumber>1.3.1.-</ecNumber>
    </recommendedName>
</protein>
<reference key="1">
    <citation type="submission" date="1994-09" db="EMBL/GenBank/DDBJ databases">
        <authorList>
            <person name="Smith D.R."/>
            <person name="Robison K."/>
        </authorList>
    </citation>
    <scope>NUCLEOTIDE SEQUENCE [GENOMIC DNA]</scope>
</reference>
<reference key="2">
    <citation type="journal article" date="1998" name="Nature">
        <title>Deciphering the biology of Mycobacterium tuberculosis from the complete genome sequence.</title>
        <authorList>
            <person name="Cole S.T."/>
            <person name="Brosch R."/>
            <person name="Parkhill J."/>
            <person name="Garnier T."/>
            <person name="Churcher C.M."/>
            <person name="Harris D.E."/>
            <person name="Gordon S.V."/>
            <person name="Eiglmeier K."/>
            <person name="Gas S."/>
            <person name="Barry C.E. III"/>
            <person name="Tekaia F."/>
            <person name="Badcock K."/>
            <person name="Basham D."/>
            <person name="Brown D."/>
            <person name="Chillingworth T."/>
            <person name="Connor R."/>
            <person name="Davies R.M."/>
            <person name="Devlin K."/>
            <person name="Feltwell T."/>
            <person name="Gentles S."/>
            <person name="Hamlin N."/>
            <person name="Holroyd S."/>
            <person name="Hornsby T."/>
            <person name="Jagels K."/>
            <person name="Krogh A."/>
            <person name="McLean J."/>
            <person name="Moule S."/>
            <person name="Murphy L.D."/>
            <person name="Oliver S."/>
            <person name="Osborne J."/>
            <person name="Quail M.A."/>
            <person name="Rajandream M.A."/>
            <person name="Rogers J."/>
            <person name="Rutter S."/>
            <person name="Seeger K."/>
            <person name="Skelton S."/>
            <person name="Squares S."/>
            <person name="Squares R."/>
            <person name="Sulston J.E."/>
            <person name="Taylor K."/>
            <person name="Whitehead S."/>
            <person name="Barrell B.G."/>
        </authorList>
    </citation>
    <scope>NUCLEOTIDE SEQUENCE [LARGE SCALE GENOMIC DNA]</scope>
    <source>
        <strain>ATCC 25618 / H37Rv</strain>
    </source>
</reference>
<reference key="3">
    <citation type="journal article" date="2007" name="J. Bacteriol.">
        <title>Identification of the missing trans-acting enoyl reductase required for phthiocerol dimycocerosate and phenolglycolipid biosynthesis in Mycobacterium tuberculosis.</title>
        <authorList>
            <person name="Simeone R."/>
            <person name="Constant P."/>
            <person name="Guilhot C."/>
            <person name="Daffe M."/>
            <person name="Chalut C."/>
        </authorList>
    </citation>
    <scope>FUNCTION AS A REDUCTASE</scope>
    <source>
        <strain>ATCC 25618 / H37Rv</strain>
    </source>
</reference>
<reference key="4">
    <citation type="journal article" date="2011" name="Mol. Cell. Proteomics">
        <title>Proteogenomic analysis of Mycobacterium tuberculosis by high resolution mass spectrometry.</title>
        <authorList>
            <person name="Kelkar D.S."/>
            <person name="Kumar D."/>
            <person name="Kumar P."/>
            <person name="Balakrishnan L."/>
            <person name="Muthusamy B."/>
            <person name="Yadav A.K."/>
            <person name="Shrivastava P."/>
            <person name="Marimuthu A."/>
            <person name="Anand S."/>
            <person name="Sundaram H."/>
            <person name="Kingsbury R."/>
            <person name="Harsha H.C."/>
            <person name="Nair B."/>
            <person name="Prasad T.S."/>
            <person name="Chauhan D.S."/>
            <person name="Katoch K."/>
            <person name="Katoch V.M."/>
            <person name="Kumar P."/>
            <person name="Chaerkady R."/>
            <person name="Ramachandran S."/>
            <person name="Dash D."/>
            <person name="Pandey A."/>
        </authorList>
    </citation>
    <scope>IDENTIFICATION BY MASS SPECTROMETRY [LARGE SCALE ANALYSIS]</scope>
    <source>
        <strain>ATCC 25618 / H37Rv</strain>
    </source>
</reference>
<gene>
    <name type="ordered locus">Rv2953</name>
</gene>
<sequence length="418" mass="45104">MSPAEREFDIVLYGATGFSGKLTAEHLAHSGSTARIALAGRSSERLRGVRMMLGPNAADWPLILADASQPLTLEAMAARAQVVLTTVGPYTRYGLPLVAACAKAGTDYADLTGELMFCRNSIDLYHKQAADTGARIILACGFDSIPSDLNVYQLYRRSVEDGTGELCDTDLVLRSFSQRWVSGGSVATYSEAMRTASSDPEARRLVTDPYTLTTDRGAEPELGAQPDFLRRPGRDLAPELAGFWTGGFVQAPFNTRIVRRSNALQEWAYGRRFRYSETMSLGKSMAAPILAAAVTGTVAGTIGLGNKYFDRLPRRLVERVTPKPGTGPSRKTQERGHYTFETYTTTTTGARYRATFAHNVDAYKSTAVLLAQSGLALALDRDRLAELRGVLTPAAAMGDALLARLPGAGVVMGTTRLS</sequence>
<keyword id="KW-0444">Lipid biosynthesis</keyword>
<keyword id="KW-0443">Lipid metabolism</keyword>
<keyword id="KW-0560">Oxidoreductase</keyword>
<keyword id="KW-1185">Reference proteome</keyword>
<proteinExistence type="evidence at protein level"/>
<comment type="function">
    <text evidence="1">Involved in the reduction of the double bond between C-4 and C-5 during phthiocerol dimycocerosates (DIM A) and glycosylated phenolphthiocerol dimycocerosates (PGL) biosynthesis.</text>
</comment>
<comment type="similarity">
    <text evidence="2">Belongs to the saccharopine dehydrogenase family. Enoyl reductase subfamily.</text>
</comment>
<comment type="sequence caution" evidence="2">
    <conflict type="frameshift">
        <sequence resource="EMBL-CDS" id="AAA50935"/>
    </conflict>
</comment>
<comment type="sequence caution" evidence="2">
    <conflict type="frameshift">
        <sequence resource="EMBL-CDS" id="AAA50936"/>
    </conflict>
</comment>
<evidence type="ECO:0000269" key="1">
    <source>
    </source>
</evidence>
<evidence type="ECO:0000305" key="2"/>
<organism>
    <name type="scientific">Mycobacterium tuberculosis (strain ATCC 25618 / H37Rv)</name>
    <dbReference type="NCBI Taxonomy" id="83332"/>
    <lineage>
        <taxon>Bacteria</taxon>
        <taxon>Bacillati</taxon>
        <taxon>Actinomycetota</taxon>
        <taxon>Actinomycetes</taxon>
        <taxon>Mycobacteriales</taxon>
        <taxon>Mycobacteriaceae</taxon>
        <taxon>Mycobacterium</taxon>
        <taxon>Mycobacterium tuberculosis complex</taxon>
    </lineage>
</organism>
<accession>P9WGV5</accession>
<accession>L0TE19</accession>
<accession>P95139</accession>
<accession>Q50462</accession>
<accession>Q50463</accession>
<accession>Q7D6D4</accession>